<evidence type="ECO:0000255" key="1">
    <source>
        <dbReference type="HAMAP-Rule" id="MF_00125"/>
    </source>
</evidence>
<protein>
    <recommendedName>
        <fullName evidence="1">ATP phosphoribosyltransferase regulatory subunit</fullName>
    </recommendedName>
</protein>
<comment type="function">
    <text evidence="1">Required for the first step of histidine biosynthesis. May allow the feedback regulation of ATP phosphoribosyltransferase activity by histidine.</text>
</comment>
<comment type="pathway">
    <text evidence="1">Amino-acid biosynthesis; L-histidine biosynthesis; L-histidine from 5-phospho-alpha-D-ribose 1-diphosphate: step 1/9.</text>
</comment>
<comment type="subunit">
    <text evidence="1">Heteromultimer composed of HisG and HisZ subunits.</text>
</comment>
<comment type="subcellular location">
    <subcellularLocation>
        <location evidence="1">Cytoplasm</location>
    </subcellularLocation>
</comment>
<comment type="miscellaneous">
    <text>This function is generally fulfilled by the C-terminal part of HisG, which is missing in some bacteria such as this one.</text>
</comment>
<comment type="similarity">
    <text evidence="1">Belongs to the class-II aminoacyl-tRNA synthetase family. HisZ subfamily.</text>
</comment>
<keyword id="KW-0028">Amino-acid biosynthesis</keyword>
<keyword id="KW-0963">Cytoplasm</keyword>
<keyword id="KW-0368">Histidine biosynthesis</keyword>
<name>HISZ_MARN8</name>
<feature type="chain" id="PRO_1000016268" description="ATP phosphoribosyltransferase regulatory subunit">
    <location>
        <begin position="1"/>
        <end position="393"/>
    </location>
</feature>
<reference key="1">
    <citation type="journal article" date="2011" name="Appl. Environ. Microbiol.">
        <title>Genomic potential of Marinobacter aquaeolei, a biogeochemical 'opportunitroph'.</title>
        <authorList>
            <person name="Singer E."/>
            <person name="Webb E.A."/>
            <person name="Nelson W.C."/>
            <person name="Heidelberg J.F."/>
            <person name="Ivanova N."/>
            <person name="Pati A."/>
            <person name="Edwards K.J."/>
        </authorList>
    </citation>
    <scope>NUCLEOTIDE SEQUENCE [LARGE SCALE GENOMIC DNA]</scope>
    <source>
        <strain>ATCC 700491 / DSM 11845 / VT8</strain>
    </source>
</reference>
<sequence>MTVSDRWLLPDGVEDILPPLAGRIESLRRDVMDTCQRWGYQLVIPPLIEYLESLFTGTGHDLELQTFKLTDQLTGRMMGVRADMTPQAARIDAHTLGQDGITRLCYAGHVLHTRPRHMLTGRTPIQAGCELFGSGSEAADMEVISLMLETLRVAGLPRLHLDLAHVSIYESLVSDAGFDRDTEAAVFDAMARKSVPELDRLLGECVPGSAGFRLRQLARVSGGVESLADAREILSGASGAIDAALDQLARVADMLNRDFPEVSLGFDFCELRGYNYHTGLVFAAYVPGHGDAVAKGGRYDAIGSDFGRARPATGFSLDIRALVSLGERPFRKAGAIWAPADNDARLEGVISGLRMTETVIRALPDDRETDPSERGCDRQLVNRDGQWVVETIA</sequence>
<accession>A1U4C1</accession>
<proteinExistence type="inferred from homology"/>
<dbReference type="EMBL" id="CP000514">
    <property type="protein sequence ID" value="ABM19840.1"/>
    <property type="molecule type" value="Genomic_DNA"/>
</dbReference>
<dbReference type="RefSeq" id="WP_011786210.1">
    <property type="nucleotide sequence ID" value="NC_008740.1"/>
</dbReference>
<dbReference type="SMR" id="A1U4C1"/>
<dbReference type="STRING" id="351348.Maqu_2765"/>
<dbReference type="KEGG" id="maq:Maqu_2765"/>
<dbReference type="eggNOG" id="COG3705">
    <property type="taxonomic scope" value="Bacteria"/>
</dbReference>
<dbReference type="HOGENOM" id="CLU_025113_0_1_6"/>
<dbReference type="OrthoDB" id="9769617at2"/>
<dbReference type="UniPathway" id="UPA00031">
    <property type="reaction ID" value="UER00006"/>
</dbReference>
<dbReference type="Proteomes" id="UP000000998">
    <property type="component" value="Chromosome"/>
</dbReference>
<dbReference type="GO" id="GO:0005737">
    <property type="term" value="C:cytoplasm"/>
    <property type="evidence" value="ECO:0007669"/>
    <property type="project" value="UniProtKB-SubCell"/>
</dbReference>
<dbReference type="GO" id="GO:0004821">
    <property type="term" value="F:histidine-tRNA ligase activity"/>
    <property type="evidence" value="ECO:0007669"/>
    <property type="project" value="TreeGrafter"/>
</dbReference>
<dbReference type="GO" id="GO:0006427">
    <property type="term" value="P:histidyl-tRNA aminoacylation"/>
    <property type="evidence" value="ECO:0007669"/>
    <property type="project" value="TreeGrafter"/>
</dbReference>
<dbReference type="GO" id="GO:0000105">
    <property type="term" value="P:L-histidine biosynthetic process"/>
    <property type="evidence" value="ECO:0007669"/>
    <property type="project" value="UniProtKB-UniRule"/>
</dbReference>
<dbReference type="CDD" id="cd00773">
    <property type="entry name" value="HisRS-like_core"/>
    <property type="match status" value="1"/>
</dbReference>
<dbReference type="Gene3D" id="3.30.930.10">
    <property type="entry name" value="Bira Bifunctional Protein, Domain 2"/>
    <property type="match status" value="1"/>
</dbReference>
<dbReference type="HAMAP" id="MF_00125">
    <property type="entry name" value="HisZ"/>
    <property type="match status" value="1"/>
</dbReference>
<dbReference type="InterPro" id="IPR045864">
    <property type="entry name" value="aa-tRNA-synth_II/BPL/LPL"/>
</dbReference>
<dbReference type="InterPro" id="IPR041715">
    <property type="entry name" value="HisRS-like_core"/>
</dbReference>
<dbReference type="InterPro" id="IPR004516">
    <property type="entry name" value="HisRS/HisZ"/>
</dbReference>
<dbReference type="InterPro" id="IPR004517">
    <property type="entry name" value="HisZ"/>
</dbReference>
<dbReference type="NCBIfam" id="TIGR00443">
    <property type="entry name" value="hisZ_biosyn_reg"/>
    <property type="match status" value="1"/>
</dbReference>
<dbReference type="NCBIfam" id="NF008935">
    <property type="entry name" value="PRK12292.1-1"/>
    <property type="match status" value="1"/>
</dbReference>
<dbReference type="NCBIfam" id="NF009086">
    <property type="entry name" value="PRK12421.1"/>
    <property type="match status" value="1"/>
</dbReference>
<dbReference type="PANTHER" id="PTHR43707:SF1">
    <property type="entry name" value="HISTIDINE--TRNA LIGASE, MITOCHONDRIAL-RELATED"/>
    <property type="match status" value="1"/>
</dbReference>
<dbReference type="PANTHER" id="PTHR43707">
    <property type="entry name" value="HISTIDYL-TRNA SYNTHETASE"/>
    <property type="match status" value="1"/>
</dbReference>
<dbReference type="Pfam" id="PF13393">
    <property type="entry name" value="tRNA-synt_His"/>
    <property type="match status" value="1"/>
</dbReference>
<dbReference type="PIRSF" id="PIRSF001549">
    <property type="entry name" value="His-tRNA_synth"/>
    <property type="match status" value="1"/>
</dbReference>
<dbReference type="SUPFAM" id="SSF55681">
    <property type="entry name" value="Class II aaRS and biotin synthetases"/>
    <property type="match status" value="1"/>
</dbReference>
<gene>
    <name evidence="1" type="primary">hisZ</name>
    <name type="ordered locus">Maqu_2765</name>
</gene>
<organism>
    <name type="scientific">Marinobacter nauticus (strain ATCC 700491 / DSM 11845 / VT8)</name>
    <name type="common">Marinobacter aquaeolei</name>
    <dbReference type="NCBI Taxonomy" id="351348"/>
    <lineage>
        <taxon>Bacteria</taxon>
        <taxon>Pseudomonadati</taxon>
        <taxon>Pseudomonadota</taxon>
        <taxon>Gammaproteobacteria</taxon>
        <taxon>Pseudomonadales</taxon>
        <taxon>Marinobacteraceae</taxon>
        <taxon>Marinobacter</taxon>
    </lineage>
</organism>